<protein>
    <recommendedName>
        <fullName>Beta-secretase 2</fullName>
        <ecNumber evidence="6">3.4.23.45</ecNumber>
    </recommendedName>
    <alternativeName>
        <fullName>Aspartyl protease 1</fullName>
        <shortName>ASP1</shortName>
        <shortName>Asp 1</shortName>
    </alternativeName>
    <alternativeName>
        <fullName>Beta-site amyloid precursor protein cleaving enzyme 2</fullName>
        <shortName>Beta-site APP cleaving enzyme 2</shortName>
    </alternativeName>
    <alternativeName>
        <fullName>Memapsin-1</fullName>
    </alternativeName>
    <alternativeName>
        <fullName>Membrane-associated aspartic protease 1</fullName>
    </alternativeName>
    <alternativeName>
        <fullName>Theta-secretase</fullName>
    </alternativeName>
</protein>
<keyword id="KW-0064">Aspartyl protease</keyword>
<keyword id="KW-0068">Autocatalytic cleavage</keyword>
<keyword id="KW-1003">Cell membrane</keyword>
<keyword id="KW-1015">Disulfide bond</keyword>
<keyword id="KW-0256">Endoplasmic reticulum</keyword>
<keyword id="KW-0967">Endosome</keyword>
<keyword id="KW-0325">Glycoprotein</keyword>
<keyword id="KW-0333">Golgi apparatus</keyword>
<keyword id="KW-0378">Hydrolase</keyword>
<keyword id="KW-0472">Membrane</keyword>
<keyword id="KW-0645">Protease</keyword>
<keyword id="KW-1185">Reference proteome</keyword>
<keyword id="KW-0732">Signal</keyword>
<keyword id="KW-0812">Transmembrane</keyword>
<keyword id="KW-1133">Transmembrane helix</keyword>
<keyword id="KW-0865">Zymogen</keyword>
<organism>
    <name type="scientific">Mus musculus</name>
    <name type="common">Mouse</name>
    <dbReference type="NCBI Taxonomy" id="10090"/>
    <lineage>
        <taxon>Eukaryota</taxon>
        <taxon>Metazoa</taxon>
        <taxon>Chordata</taxon>
        <taxon>Craniata</taxon>
        <taxon>Vertebrata</taxon>
        <taxon>Euteleostomi</taxon>
        <taxon>Mammalia</taxon>
        <taxon>Eutheria</taxon>
        <taxon>Euarchontoglires</taxon>
        <taxon>Glires</taxon>
        <taxon>Rodentia</taxon>
        <taxon>Myomorpha</taxon>
        <taxon>Muroidea</taxon>
        <taxon>Muridae</taxon>
        <taxon>Murinae</taxon>
        <taxon>Mus</taxon>
        <taxon>Mus</taxon>
    </lineage>
</organism>
<name>BACE2_MOUSE</name>
<dbReference type="EC" id="3.4.23.45" evidence="6"/>
<dbReference type="EMBL" id="AF216310">
    <property type="protein sequence ID" value="AAF36599.1"/>
    <property type="molecule type" value="mRNA"/>
</dbReference>
<dbReference type="EMBL" id="AK052309">
    <property type="protein sequence ID" value="BAC34931.1"/>
    <property type="molecule type" value="mRNA"/>
</dbReference>
<dbReference type="EMBL" id="AK078770">
    <property type="protein sequence ID" value="BAC37384.1"/>
    <property type="molecule type" value="mRNA"/>
</dbReference>
<dbReference type="EMBL" id="AK165036">
    <property type="protein sequence ID" value="BAE38011.1"/>
    <property type="molecule type" value="mRNA"/>
</dbReference>
<dbReference type="EMBL" id="CH466602">
    <property type="protein sequence ID" value="EDL03663.1"/>
    <property type="molecule type" value="Genomic_DNA"/>
</dbReference>
<dbReference type="EMBL" id="BC120773">
    <property type="protein sequence ID" value="AAI20774.1"/>
    <property type="molecule type" value="mRNA"/>
</dbReference>
<dbReference type="EMBL" id="BC131947">
    <property type="protein sequence ID" value="AAI31948.1"/>
    <property type="molecule type" value="mRNA"/>
</dbReference>
<dbReference type="EMBL" id="AF051150">
    <property type="protein sequence ID" value="AAD45964.1"/>
    <property type="molecule type" value="mRNA"/>
</dbReference>
<dbReference type="CCDS" id="CCDS28359.1"/>
<dbReference type="RefSeq" id="NP_062390.3">
    <property type="nucleotide sequence ID" value="NM_019517.5"/>
</dbReference>
<dbReference type="SMR" id="Q9JL18"/>
<dbReference type="FunCoup" id="Q9JL18">
    <property type="interactions" value="243"/>
</dbReference>
<dbReference type="STRING" id="10090.ENSMUSP00000043918"/>
<dbReference type="BindingDB" id="Q9JL18"/>
<dbReference type="ChEMBL" id="CHEMBL3638357"/>
<dbReference type="MEROPS" id="A01.041"/>
<dbReference type="GlyCosmos" id="Q9JL18">
    <property type="glycosylation" value="2 sites, No reported glycans"/>
</dbReference>
<dbReference type="GlyGen" id="Q9JL18">
    <property type="glycosylation" value="2 sites"/>
</dbReference>
<dbReference type="iPTMnet" id="Q9JL18"/>
<dbReference type="PhosphoSitePlus" id="Q9JL18"/>
<dbReference type="PaxDb" id="10090-ENSMUSP00000043918"/>
<dbReference type="ProteomicsDB" id="277174"/>
<dbReference type="DNASU" id="56175"/>
<dbReference type="GeneID" id="56175"/>
<dbReference type="KEGG" id="mmu:56175"/>
<dbReference type="UCSC" id="uc008ade.2">
    <property type="organism name" value="mouse"/>
</dbReference>
<dbReference type="AGR" id="MGI:1860440"/>
<dbReference type="CTD" id="25825"/>
<dbReference type="MGI" id="MGI:1860440">
    <property type="gene designation" value="Bace2"/>
</dbReference>
<dbReference type="eggNOG" id="KOG1339">
    <property type="taxonomic scope" value="Eukaryota"/>
</dbReference>
<dbReference type="InParanoid" id="Q9JL18"/>
<dbReference type="OrthoDB" id="2747330at2759"/>
<dbReference type="PhylomeDB" id="Q9JL18"/>
<dbReference type="TreeFam" id="TF329595"/>
<dbReference type="BRENDA" id="3.4.23.45">
    <property type="organism ID" value="3474"/>
</dbReference>
<dbReference type="BioGRID-ORCS" id="56175">
    <property type="hits" value="1 hit in 76 CRISPR screens"/>
</dbReference>
<dbReference type="ChiTaRS" id="Bace2">
    <property type="organism name" value="mouse"/>
</dbReference>
<dbReference type="PRO" id="PR:Q9JL18"/>
<dbReference type="Proteomes" id="UP000000589">
    <property type="component" value="Unplaced"/>
</dbReference>
<dbReference type="RNAct" id="Q9JL18">
    <property type="molecule type" value="protein"/>
</dbReference>
<dbReference type="GO" id="GO:0005783">
    <property type="term" value="C:endoplasmic reticulum"/>
    <property type="evidence" value="ECO:0007669"/>
    <property type="project" value="UniProtKB-SubCell"/>
</dbReference>
<dbReference type="GO" id="GO:0005768">
    <property type="term" value="C:endosome"/>
    <property type="evidence" value="ECO:0007669"/>
    <property type="project" value="UniProtKB-SubCell"/>
</dbReference>
<dbReference type="GO" id="GO:0005794">
    <property type="term" value="C:Golgi apparatus"/>
    <property type="evidence" value="ECO:0000250"/>
    <property type="project" value="UniProtKB"/>
</dbReference>
<dbReference type="GO" id="GO:0042470">
    <property type="term" value="C:melanosome"/>
    <property type="evidence" value="ECO:0007669"/>
    <property type="project" value="UniProtKB-SubCell"/>
</dbReference>
<dbReference type="GO" id="GO:0005886">
    <property type="term" value="C:plasma membrane"/>
    <property type="evidence" value="ECO:0000314"/>
    <property type="project" value="UniProtKB"/>
</dbReference>
<dbReference type="GO" id="GO:0004190">
    <property type="term" value="F:aspartic-type endopeptidase activity"/>
    <property type="evidence" value="ECO:0000250"/>
    <property type="project" value="UniProtKB"/>
</dbReference>
<dbReference type="GO" id="GO:0008233">
    <property type="term" value="F:peptidase activity"/>
    <property type="evidence" value="ECO:0000315"/>
    <property type="project" value="MGI"/>
</dbReference>
<dbReference type="GO" id="GO:0032438">
    <property type="term" value="P:melanosome organization"/>
    <property type="evidence" value="ECO:0000315"/>
    <property type="project" value="UniProtKB"/>
</dbReference>
<dbReference type="GO" id="GO:0006509">
    <property type="term" value="P:membrane protein ectodomain proteolysis"/>
    <property type="evidence" value="ECO:0000250"/>
    <property type="project" value="UniProtKB"/>
</dbReference>
<dbReference type="GO" id="GO:0042985">
    <property type="term" value="P:negative regulation of amyloid precursor protein biosynthetic process"/>
    <property type="evidence" value="ECO:0000250"/>
    <property type="project" value="UniProtKB"/>
</dbReference>
<dbReference type="GO" id="GO:0140448">
    <property type="term" value="P:signaling receptor ligand precursor processing"/>
    <property type="evidence" value="ECO:0000315"/>
    <property type="project" value="MGI"/>
</dbReference>
<dbReference type="CDD" id="cd05473">
    <property type="entry name" value="beta_secretase_like"/>
    <property type="match status" value="1"/>
</dbReference>
<dbReference type="FunFam" id="2.40.70.10:FF:000003">
    <property type="entry name" value="Beta-secretase 1"/>
    <property type="match status" value="1"/>
</dbReference>
<dbReference type="FunFam" id="2.40.70.10:FF:000007">
    <property type="entry name" value="Beta-secretase 1"/>
    <property type="match status" value="1"/>
</dbReference>
<dbReference type="Gene3D" id="2.40.70.10">
    <property type="entry name" value="Acid Proteases"/>
    <property type="match status" value="2"/>
</dbReference>
<dbReference type="InterPro" id="IPR001461">
    <property type="entry name" value="Aspartic_peptidase_A1"/>
</dbReference>
<dbReference type="InterPro" id="IPR001969">
    <property type="entry name" value="Aspartic_peptidase_AS"/>
</dbReference>
<dbReference type="InterPro" id="IPR009119">
    <property type="entry name" value="BACE"/>
</dbReference>
<dbReference type="InterPro" id="IPR009121">
    <property type="entry name" value="BACE2"/>
</dbReference>
<dbReference type="InterPro" id="IPR033874">
    <property type="entry name" value="Memapsin-like"/>
</dbReference>
<dbReference type="InterPro" id="IPR033121">
    <property type="entry name" value="PEPTIDASE_A1"/>
</dbReference>
<dbReference type="InterPro" id="IPR021109">
    <property type="entry name" value="Peptidase_aspartic_dom_sf"/>
</dbReference>
<dbReference type="PANTHER" id="PTHR47965">
    <property type="entry name" value="ASPARTYL PROTEASE-RELATED"/>
    <property type="match status" value="1"/>
</dbReference>
<dbReference type="PANTHER" id="PTHR47965:SF40">
    <property type="entry name" value="BETA-SECRETASE 2"/>
    <property type="match status" value="1"/>
</dbReference>
<dbReference type="Pfam" id="PF00026">
    <property type="entry name" value="Asp"/>
    <property type="match status" value="1"/>
</dbReference>
<dbReference type="PRINTS" id="PR01817">
    <property type="entry name" value="BACE2"/>
</dbReference>
<dbReference type="PRINTS" id="PR01815">
    <property type="entry name" value="BACEFAMILY"/>
</dbReference>
<dbReference type="PRINTS" id="PR00792">
    <property type="entry name" value="PEPSIN"/>
</dbReference>
<dbReference type="SUPFAM" id="SSF50630">
    <property type="entry name" value="Acid proteases"/>
    <property type="match status" value="1"/>
</dbReference>
<dbReference type="PROSITE" id="PS00141">
    <property type="entry name" value="ASP_PROTEASE"/>
    <property type="match status" value="2"/>
</dbReference>
<dbReference type="PROSITE" id="PS51767">
    <property type="entry name" value="PEPTIDASE_A1"/>
    <property type="match status" value="1"/>
</dbReference>
<reference key="1">
    <citation type="submission" date="1999-12" db="EMBL/GenBank/DDBJ databases">
        <title>Molecular characterization of the mouse Asp1 gene, a homolog of the human ASP1 (Down Syndrome region aspartyl protease).</title>
        <authorList>
            <person name="Choi D.K."/>
            <person name="Sugano S."/>
            <person name="Sakaki Y."/>
        </authorList>
    </citation>
    <scope>NUCLEOTIDE SEQUENCE [MRNA]</scope>
</reference>
<reference key="2">
    <citation type="journal article" date="2005" name="Science">
        <title>The transcriptional landscape of the mammalian genome.</title>
        <authorList>
            <person name="Carninci P."/>
            <person name="Kasukawa T."/>
            <person name="Katayama S."/>
            <person name="Gough J."/>
            <person name="Frith M.C."/>
            <person name="Maeda N."/>
            <person name="Oyama R."/>
            <person name="Ravasi T."/>
            <person name="Lenhard B."/>
            <person name="Wells C."/>
            <person name="Kodzius R."/>
            <person name="Shimokawa K."/>
            <person name="Bajic V.B."/>
            <person name="Brenner S.E."/>
            <person name="Batalov S."/>
            <person name="Forrest A.R."/>
            <person name="Zavolan M."/>
            <person name="Davis M.J."/>
            <person name="Wilming L.G."/>
            <person name="Aidinis V."/>
            <person name="Allen J.E."/>
            <person name="Ambesi-Impiombato A."/>
            <person name="Apweiler R."/>
            <person name="Aturaliya R.N."/>
            <person name="Bailey T.L."/>
            <person name="Bansal M."/>
            <person name="Baxter L."/>
            <person name="Beisel K.W."/>
            <person name="Bersano T."/>
            <person name="Bono H."/>
            <person name="Chalk A.M."/>
            <person name="Chiu K.P."/>
            <person name="Choudhary V."/>
            <person name="Christoffels A."/>
            <person name="Clutterbuck D.R."/>
            <person name="Crowe M.L."/>
            <person name="Dalla E."/>
            <person name="Dalrymple B.P."/>
            <person name="de Bono B."/>
            <person name="Della Gatta G."/>
            <person name="di Bernardo D."/>
            <person name="Down T."/>
            <person name="Engstrom P."/>
            <person name="Fagiolini M."/>
            <person name="Faulkner G."/>
            <person name="Fletcher C.F."/>
            <person name="Fukushima T."/>
            <person name="Furuno M."/>
            <person name="Futaki S."/>
            <person name="Gariboldi M."/>
            <person name="Georgii-Hemming P."/>
            <person name="Gingeras T.R."/>
            <person name="Gojobori T."/>
            <person name="Green R.E."/>
            <person name="Gustincich S."/>
            <person name="Harbers M."/>
            <person name="Hayashi Y."/>
            <person name="Hensch T.K."/>
            <person name="Hirokawa N."/>
            <person name="Hill D."/>
            <person name="Huminiecki L."/>
            <person name="Iacono M."/>
            <person name="Ikeo K."/>
            <person name="Iwama A."/>
            <person name="Ishikawa T."/>
            <person name="Jakt M."/>
            <person name="Kanapin A."/>
            <person name="Katoh M."/>
            <person name="Kawasawa Y."/>
            <person name="Kelso J."/>
            <person name="Kitamura H."/>
            <person name="Kitano H."/>
            <person name="Kollias G."/>
            <person name="Krishnan S.P."/>
            <person name="Kruger A."/>
            <person name="Kummerfeld S.K."/>
            <person name="Kurochkin I.V."/>
            <person name="Lareau L.F."/>
            <person name="Lazarevic D."/>
            <person name="Lipovich L."/>
            <person name="Liu J."/>
            <person name="Liuni S."/>
            <person name="McWilliam S."/>
            <person name="Madan Babu M."/>
            <person name="Madera M."/>
            <person name="Marchionni L."/>
            <person name="Matsuda H."/>
            <person name="Matsuzawa S."/>
            <person name="Miki H."/>
            <person name="Mignone F."/>
            <person name="Miyake S."/>
            <person name="Morris K."/>
            <person name="Mottagui-Tabar S."/>
            <person name="Mulder N."/>
            <person name="Nakano N."/>
            <person name="Nakauchi H."/>
            <person name="Ng P."/>
            <person name="Nilsson R."/>
            <person name="Nishiguchi S."/>
            <person name="Nishikawa S."/>
            <person name="Nori F."/>
            <person name="Ohara O."/>
            <person name="Okazaki Y."/>
            <person name="Orlando V."/>
            <person name="Pang K.C."/>
            <person name="Pavan W.J."/>
            <person name="Pavesi G."/>
            <person name="Pesole G."/>
            <person name="Petrovsky N."/>
            <person name="Piazza S."/>
            <person name="Reed J."/>
            <person name="Reid J.F."/>
            <person name="Ring B.Z."/>
            <person name="Ringwald M."/>
            <person name="Rost B."/>
            <person name="Ruan Y."/>
            <person name="Salzberg S.L."/>
            <person name="Sandelin A."/>
            <person name="Schneider C."/>
            <person name="Schoenbach C."/>
            <person name="Sekiguchi K."/>
            <person name="Semple C.A."/>
            <person name="Seno S."/>
            <person name="Sessa L."/>
            <person name="Sheng Y."/>
            <person name="Shibata Y."/>
            <person name="Shimada H."/>
            <person name="Shimada K."/>
            <person name="Silva D."/>
            <person name="Sinclair B."/>
            <person name="Sperling S."/>
            <person name="Stupka E."/>
            <person name="Sugiura K."/>
            <person name="Sultana R."/>
            <person name="Takenaka Y."/>
            <person name="Taki K."/>
            <person name="Tammoja K."/>
            <person name="Tan S.L."/>
            <person name="Tang S."/>
            <person name="Taylor M.S."/>
            <person name="Tegner J."/>
            <person name="Teichmann S.A."/>
            <person name="Ueda H.R."/>
            <person name="van Nimwegen E."/>
            <person name="Verardo R."/>
            <person name="Wei C.L."/>
            <person name="Yagi K."/>
            <person name="Yamanishi H."/>
            <person name="Zabarovsky E."/>
            <person name="Zhu S."/>
            <person name="Zimmer A."/>
            <person name="Hide W."/>
            <person name="Bult C."/>
            <person name="Grimmond S.M."/>
            <person name="Teasdale R.D."/>
            <person name="Liu E.T."/>
            <person name="Brusic V."/>
            <person name="Quackenbush J."/>
            <person name="Wahlestedt C."/>
            <person name="Mattick J.S."/>
            <person name="Hume D.A."/>
            <person name="Kai C."/>
            <person name="Sasaki D."/>
            <person name="Tomaru Y."/>
            <person name="Fukuda S."/>
            <person name="Kanamori-Katayama M."/>
            <person name="Suzuki M."/>
            <person name="Aoki J."/>
            <person name="Arakawa T."/>
            <person name="Iida J."/>
            <person name="Imamura K."/>
            <person name="Itoh M."/>
            <person name="Kato T."/>
            <person name="Kawaji H."/>
            <person name="Kawagashira N."/>
            <person name="Kawashima T."/>
            <person name="Kojima M."/>
            <person name="Kondo S."/>
            <person name="Konno H."/>
            <person name="Nakano K."/>
            <person name="Ninomiya N."/>
            <person name="Nishio T."/>
            <person name="Okada M."/>
            <person name="Plessy C."/>
            <person name="Shibata K."/>
            <person name="Shiraki T."/>
            <person name="Suzuki S."/>
            <person name="Tagami M."/>
            <person name="Waki K."/>
            <person name="Watahiki A."/>
            <person name="Okamura-Oho Y."/>
            <person name="Suzuki H."/>
            <person name="Kawai J."/>
            <person name="Hayashizaki Y."/>
        </authorList>
    </citation>
    <scope>NUCLEOTIDE SEQUENCE [LARGE SCALE MRNA]</scope>
    <source>
        <strain>C57BL/6J</strain>
        <tissue>Eye</tissue>
        <tissue>Heart</tissue>
        <tissue>Testis</tissue>
    </source>
</reference>
<reference key="3">
    <citation type="submission" date="2005-09" db="EMBL/GenBank/DDBJ databases">
        <authorList>
            <person name="Mural R.J."/>
            <person name="Adams M.D."/>
            <person name="Myers E.W."/>
            <person name="Smith H.O."/>
            <person name="Venter J.C."/>
        </authorList>
    </citation>
    <scope>NUCLEOTIDE SEQUENCE [LARGE SCALE GENOMIC DNA]</scope>
</reference>
<reference key="4">
    <citation type="journal article" date="2004" name="Genome Res.">
        <title>The status, quality, and expansion of the NIH full-length cDNA project: the Mammalian Gene Collection (MGC).</title>
        <authorList>
            <consortium name="The MGC Project Team"/>
        </authorList>
    </citation>
    <scope>NUCLEOTIDE SEQUENCE [LARGE SCALE MRNA]</scope>
    <source>
        <tissue>Brain</tissue>
    </source>
</reference>
<reference key="5">
    <citation type="journal article" date="2000" name="FEBS Lett.">
        <title>The gene encoding DRAP (BACE2), a glycosylated transmembrane protein of the aspartic protease family, maps to the down critical region.</title>
        <authorList>
            <person name="Acquati F."/>
            <person name="Accarino M.P."/>
            <person name="Nucci C."/>
            <person name="Fumagalli P."/>
            <person name="Jovine L."/>
            <person name="Ottolenghi S."/>
            <person name="Taramelli R."/>
        </authorList>
    </citation>
    <scope>NUCLEOTIDE SEQUENCE [MRNA] OF 260-514</scope>
</reference>
<reference key="6">
    <citation type="journal article" date="2011" name="Cell Metab.">
        <title>Bace2 is a beta cell-enriched protease that regulates pancreatic beta cell function and mass.</title>
        <authorList>
            <person name="Esterhazy D."/>
            <person name="Stuetzer I."/>
            <person name="Wang H."/>
            <person name="Rechsteiner M.P."/>
            <person name="Beauchamp J."/>
            <person name="Doebeli H."/>
            <person name="Hilpert H."/>
            <person name="Matile H."/>
            <person name="Prummer M."/>
            <person name="Schmidt A."/>
            <person name="Lieske N."/>
            <person name="Boehm B."/>
            <person name="Marselli L."/>
            <person name="Bosco D."/>
            <person name="Kerr-Conte J."/>
            <person name="Aebersold R."/>
            <person name="Spinas G.A."/>
            <person name="Moch H."/>
            <person name="Migliorini C."/>
            <person name="Stoffel M."/>
        </authorList>
    </citation>
    <scope>TISSUE SPECIFICITY</scope>
    <scope>SUBCELLULAR LOCATION</scope>
    <scope>CATALYTIC ACTIVITY</scope>
</reference>
<reference key="7">
    <citation type="journal article" date="2013" name="Proc. Natl. Acad. Sci. U.S.A.">
        <title>BACE2 processes PMEL to form the melanosome amyloid matrix in pigment cells.</title>
        <authorList>
            <person name="Rochin L."/>
            <person name="Hurbain I."/>
            <person name="Serneels L."/>
            <person name="Fort C."/>
            <person name="Watt B."/>
            <person name="Leblanc P."/>
            <person name="Marks M.S."/>
            <person name="De Strooper B."/>
            <person name="Raposo G."/>
            <person name="van Niel G."/>
        </authorList>
    </citation>
    <scope>DISRUPTION PHENOTYPE</scope>
</reference>
<gene>
    <name type="primary">Bace2</name>
</gene>
<comment type="function">
    <text evidence="2">Responsible for the proteolytic processing of the amyloid precursor protein (APP). Cleaves APP, between residues 690 and 691, leading to the generation and extracellular release of beta-cleaved soluble APP, and a corresponding cell-associated C-terminal fragment which is later released by gamma-secretase. It has also been shown that it can cleave APP between residues 671 and 672. Involved in the proteolytic shedding of PMEL at early stages of melanosome biogenesis. Cleaves PMEL within the M-beta fragment to release the amyloidogenic PMEL luminal fragment containing M-alpha and a small portion of M-beta N-terminus. This is a prerequisite step for subsequent processing and assembly of PMEL fibrils into amyloid sheets. Responsible also for the proteolytic processing of CLTRN in pancreatic beta cells.</text>
</comment>
<comment type="catalytic activity">
    <reaction evidence="2 6">
        <text>Broad endopeptidase specificity. Cleaves Glu-Val-Asn-Leu-|-Asp-Ala-Glu-Phe in the Swedish variant of Alzheimer's amyloid precursor protein.</text>
        <dbReference type="EC" id="3.4.23.45"/>
    </reaction>
</comment>
<comment type="subunit">
    <text evidence="2">Monomer. Interacts with RTN3 and RTN4.</text>
</comment>
<comment type="subcellular location">
    <subcellularLocation>
        <location evidence="6">Cell membrane</location>
        <topology evidence="1">Single-pass type I membrane protein</topology>
    </subcellularLocation>
    <subcellularLocation>
        <location evidence="2">Golgi apparatus</location>
    </subcellularLocation>
    <subcellularLocation>
        <location evidence="2">Endoplasmic reticulum</location>
    </subcellularLocation>
    <subcellularLocation>
        <location evidence="2">Endosome</location>
    </subcellularLocation>
    <subcellularLocation>
        <location evidence="2">Melanosome</location>
    </subcellularLocation>
    <text evidence="2">Colocalizes with PMEL in stage I and II melanosomes.</text>
</comment>
<comment type="tissue specificity">
    <text evidence="6">High expression in pancreatic islets. Expressed at much lower levels in the pituitary, colon, and ovaries and is nearly absent from all the other tissues.</text>
</comment>
<comment type="PTM">
    <text evidence="2">Undergoes autoproteolytic cleavage.</text>
</comment>
<comment type="PTM">
    <text evidence="2">Glycosylated.</text>
</comment>
<comment type="disruption phenotype">
    <text evidence="7">Mutant mice display silvery coat color. This is associated with abnormal melanosome morphology and melanin deposits, likely due to deficient PMEL processing and amyloid fibril formation.</text>
</comment>
<comment type="similarity">
    <text evidence="8">Belongs to the peptidase A1 family.</text>
</comment>
<evidence type="ECO:0000250" key="1"/>
<evidence type="ECO:0000250" key="2">
    <source>
        <dbReference type="UniProtKB" id="Q9Y5Z0"/>
    </source>
</evidence>
<evidence type="ECO:0000255" key="3"/>
<evidence type="ECO:0000255" key="4">
    <source>
        <dbReference type="PROSITE-ProRule" id="PRU01103"/>
    </source>
</evidence>
<evidence type="ECO:0000255" key="5">
    <source>
        <dbReference type="PROSITE-ProRule" id="PRU10094"/>
    </source>
</evidence>
<evidence type="ECO:0000269" key="6">
    <source>
    </source>
</evidence>
<evidence type="ECO:0000269" key="7">
    <source>
    </source>
</evidence>
<evidence type="ECO:0000305" key="8"/>
<feature type="signal peptide" evidence="3">
    <location>
        <begin position="1"/>
        <end position="19"/>
    </location>
</feature>
<feature type="propeptide" id="PRO_0000383646" evidence="1">
    <location>
        <begin position="20"/>
        <end position="62"/>
    </location>
</feature>
<feature type="chain" id="PRO_0000383647" description="Beta-secretase 2">
    <location>
        <begin position="63"/>
        <end position="514"/>
    </location>
</feature>
<feature type="topological domain" description="Extracellular" evidence="3">
    <location>
        <begin position="20"/>
        <end position="469"/>
    </location>
</feature>
<feature type="transmembrane region" description="Helical" evidence="3">
    <location>
        <begin position="470"/>
        <end position="490"/>
    </location>
</feature>
<feature type="topological domain" description="Cytoplasmic" evidence="3">
    <location>
        <begin position="491"/>
        <end position="514"/>
    </location>
</feature>
<feature type="domain" description="Peptidase A1" evidence="4">
    <location>
        <begin position="88"/>
        <end position="425"/>
    </location>
</feature>
<feature type="active site" evidence="5">
    <location>
        <position position="106"/>
    </location>
</feature>
<feature type="active site" evidence="5">
    <location>
        <position position="299"/>
    </location>
</feature>
<feature type="glycosylation site" description="N-linked (GlcNAc...) asparagine" evidence="3">
    <location>
        <position position="166"/>
    </location>
</feature>
<feature type="glycosylation site" description="N-linked (GlcNAc...) asparagine" evidence="3">
    <location>
        <position position="362"/>
    </location>
</feature>
<feature type="disulfide bond" evidence="1">
    <location>
        <begin position="229"/>
        <end position="429"/>
    </location>
</feature>
<feature type="disulfide bond" evidence="1">
    <location>
        <begin position="288"/>
        <end position="453"/>
    </location>
</feature>
<feature type="disulfide bond" evidence="1">
    <location>
        <begin position="340"/>
        <end position="389"/>
    </location>
</feature>
<feature type="sequence conflict" description="In Ref. 2; BAC34931/BAE38011/BAC37384." evidence="8" ref="2">
    <original>L</original>
    <variation>P</variation>
    <location>
        <position position="11"/>
    </location>
</feature>
<feature type="sequence conflict" description="In Ref. 2; BAC34931/BAE38011/BAC37384." evidence="8" ref="2">
    <original>G</original>
    <variation>R</variation>
    <location>
        <position position="37"/>
    </location>
</feature>
<feature type="sequence conflict" description="In Ref. 2; BAC37384." evidence="8" ref="2">
    <original>E</original>
    <variation>G</variation>
    <location>
        <position position="53"/>
    </location>
</feature>
<feature type="sequence conflict" description="In Ref. 2; BAC34931." evidence="8" ref="2">
    <original>I</original>
    <variation>T</variation>
    <location>
        <position position="369"/>
    </location>
</feature>
<feature type="sequence conflict" description="In Ref. 5; AAD45964." evidence="8" ref="5">
    <original>L</original>
    <variation>V</variation>
    <location>
        <position position="488"/>
    </location>
</feature>
<accession>Q9JL18</accession>
<accession>Q3TNS7</accession>
<accession>Q8C5E9</accession>
<accession>Q8C793</accession>
<accession>Q9R1P7</accession>
<sequence>MGALLRALLLLVLAQWLLSAVPALAPAPFTLPLQVAGATNHRASAVPGLGTPELPRADGLALALEPVRATANFLAMVDNLQGDSGRGYYLEMLIGTPPQKVQILVDTGSSNFAVAGAPHSYIDTYFDSESSSTYHSKGFDVTVKYTQGSWTGFVGEDLVTIPKGFNSSFLVNIATIFESENFFLPGIKWNGILGLAYAALAKPSSSLETFFDSLVAQAKIPDIFSMQMCGAGLPVAGSGTNGGSLVLGGIEPSLYKGDIWYTPIKEEWYYQIEILKLEIGGQNLNLDCREYNADKAIVDSGTTLLRLPQKVFDAVVEAVARTSLIPEFSDGFWTGAQLACWTNSETPWAYFPKISIYLRDENASRSFRITILPQLYIQPMMGAGFNYECYRFGISSSTNALVIGATVMEGFYVVFDRAQRRVGFAVSPCAEIEGTTVSEISGPFSTEDIASNCVPAQALNEPILWIVSYALMSVCGAILLVLILLLLLPLHCRHAPRDPEVVNDESSLVRHRWK</sequence>
<proteinExistence type="evidence at protein level"/>